<protein>
    <recommendedName>
        <fullName evidence="1">Large ribosomal subunit protein uL4</fullName>
    </recommendedName>
    <alternativeName>
        <fullName evidence="3">50S ribosomal protein L4</fullName>
    </alternativeName>
</protein>
<feature type="chain" id="PRO_1000052386" description="Large ribosomal subunit protein uL4">
    <location>
        <begin position="1"/>
        <end position="204"/>
    </location>
</feature>
<feature type="region of interest" description="Disordered" evidence="2">
    <location>
        <begin position="44"/>
        <end position="76"/>
    </location>
</feature>
<organism>
    <name type="scientific">Clostridium perfringens (strain ATCC 13124 / DSM 756 / JCM 1290 / NCIMB 6125 / NCTC 8237 / Type A)</name>
    <dbReference type="NCBI Taxonomy" id="195103"/>
    <lineage>
        <taxon>Bacteria</taxon>
        <taxon>Bacillati</taxon>
        <taxon>Bacillota</taxon>
        <taxon>Clostridia</taxon>
        <taxon>Eubacteriales</taxon>
        <taxon>Clostridiaceae</taxon>
        <taxon>Clostridium</taxon>
    </lineage>
</organism>
<dbReference type="EMBL" id="CP000246">
    <property type="protein sequence ID" value="ABG84504.1"/>
    <property type="molecule type" value="Genomic_DNA"/>
</dbReference>
<dbReference type="RefSeq" id="WP_003454270.1">
    <property type="nucleotide sequence ID" value="NC_008261.1"/>
</dbReference>
<dbReference type="SMR" id="Q0TMP7"/>
<dbReference type="STRING" id="195103.CPF_2713"/>
<dbReference type="PaxDb" id="195103-CPF_2713"/>
<dbReference type="GeneID" id="93001010"/>
<dbReference type="KEGG" id="cpf:CPF_2713"/>
<dbReference type="eggNOG" id="COG0088">
    <property type="taxonomic scope" value="Bacteria"/>
</dbReference>
<dbReference type="HOGENOM" id="CLU_041575_5_2_9"/>
<dbReference type="Proteomes" id="UP000001823">
    <property type="component" value="Chromosome"/>
</dbReference>
<dbReference type="GO" id="GO:1990904">
    <property type="term" value="C:ribonucleoprotein complex"/>
    <property type="evidence" value="ECO:0007669"/>
    <property type="project" value="UniProtKB-KW"/>
</dbReference>
<dbReference type="GO" id="GO:0005840">
    <property type="term" value="C:ribosome"/>
    <property type="evidence" value="ECO:0007669"/>
    <property type="project" value="UniProtKB-KW"/>
</dbReference>
<dbReference type="GO" id="GO:0019843">
    <property type="term" value="F:rRNA binding"/>
    <property type="evidence" value="ECO:0007669"/>
    <property type="project" value="UniProtKB-UniRule"/>
</dbReference>
<dbReference type="GO" id="GO:0003735">
    <property type="term" value="F:structural constituent of ribosome"/>
    <property type="evidence" value="ECO:0007669"/>
    <property type="project" value="InterPro"/>
</dbReference>
<dbReference type="GO" id="GO:0006412">
    <property type="term" value="P:translation"/>
    <property type="evidence" value="ECO:0007669"/>
    <property type="project" value="UniProtKB-UniRule"/>
</dbReference>
<dbReference type="Gene3D" id="3.40.1370.10">
    <property type="match status" value="1"/>
</dbReference>
<dbReference type="HAMAP" id="MF_01328_B">
    <property type="entry name" value="Ribosomal_uL4_B"/>
    <property type="match status" value="1"/>
</dbReference>
<dbReference type="InterPro" id="IPR002136">
    <property type="entry name" value="Ribosomal_uL4"/>
</dbReference>
<dbReference type="InterPro" id="IPR013005">
    <property type="entry name" value="Ribosomal_uL4-like"/>
</dbReference>
<dbReference type="InterPro" id="IPR023574">
    <property type="entry name" value="Ribosomal_uL4_dom_sf"/>
</dbReference>
<dbReference type="NCBIfam" id="TIGR03953">
    <property type="entry name" value="rplD_bact"/>
    <property type="match status" value="1"/>
</dbReference>
<dbReference type="PANTHER" id="PTHR10746">
    <property type="entry name" value="50S RIBOSOMAL PROTEIN L4"/>
    <property type="match status" value="1"/>
</dbReference>
<dbReference type="PANTHER" id="PTHR10746:SF6">
    <property type="entry name" value="LARGE RIBOSOMAL SUBUNIT PROTEIN UL4M"/>
    <property type="match status" value="1"/>
</dbReference>
<dbReference type="Pfam" id="PF00573">
    <property type="entry name" value="Ribosomal_L4"/>
    <property type="match status" value="1"/>
</dbReference>
<dbReference type="SUPFAM" id="SSF52166">
    <property type="entry name" value="Ribosomal protein L4"/>
    <property type="match status" value="1"/>
</dbReference>
<name>RL4_CLOP1</name>
<gene>
    <name evidence="1" type="primary">rplD</name>
    <name type="ordered locus">CPF_2713</name>
</gene>
<reference key="1">
    <citation type="journal article" date="2006" name="Genome Res.">
        <title>Skewed genomic variability in strains of the toxigenic bacterial pathogen, Clostridium perfringens.</title>
        <authorList>
            <person name="Myers G.S.A."/>
            <person name="Rasko D.A."/>
            <person name="Cheung J.K."/>
            <person name="Ravel J."/>
            <person name="Seshadri R."/>
            <person name="DeBoy R.T."/>
            <person name="Ren Q."/>
            <person name="Varga J."/>
            <person name="Awad M.M."/>
            <person name="Brinkac L.M."/>
            <person name="Daugherty S.C."/>
            <person name="Haft D.H."/>
            <person name="Dodson R.J."/>
            <person name="Madupu R."/>
            <person name="Nelson W.C."/>
            <person name="Rosovitz M.J."/>
            <person name="Sullivan S.A."/>
            <person name="Khouri H."/>
            <person name="Dimitrov G.I."/>
            <person name="Watkins K.L."/>
            <person name="Mulligan S."/>
            <person name="Benton J."/>
            <person name="Radune D."/>
            <person name="Fisher D.J."/>
            <person name="Atkins H.S."/>
            <person name="Hiscox T."/>
            <person name="Jost B.H."/>
            <person name="Billington S.J."/>
            <person name="Songer J.G."/>
            <person name="McClane B.A."/>
            <person name="Titball R.W."/>
            <person name="Rood J.I."/>
            <person name="Melville S.B."/>
            <person name="Paulsen I.T."/>
        </authorList>
    </citation>
    <scope>NUCLEOTIDE SEQUENCE [LARGE SCALE GENOMIC DNA]</scope>
    <source>
        <strain>ATCC 13124 / DSM 756 / JCM 1290 / NCIMB 6125 / NCTC 8237 / S 107 / Type A</strain>
    </source>
</reference>
<proteinExistence type="inferred from homology"/>
<keyword id="KW-0687">Ribonucleoprotein</keyword>
<keyword id="KW-0689">Ribosomal protein</keyword>
<keyword id="KW-0694">RNA-binding</keyword>
<keyword id="KW-0699">rRNA-binding</keyword>
<evidence type="ECO:0000255" key="1">
    <source>
        <dbReference type="HAMAP-Rule" id="MF_01328"/>
    </source>
</evidence>
<evidence type="ECO:0000256" key="2">
    <source>
        <dbReference type="SAM" id="MobiDB-lite"/>
    </source>
</evidence>
<evidence type="ECO:0000305" key="3"/>
<accession>Q0TMP7</accession>
<sequence>MPKVGLFNKEGQQVGDIQLNEQVFGVEVNKYALHQVVVAQLANKRQGTQSAKTRSEVRGGGIKPWRQKGTGRARQGSIRAPQWIKGGVVFAPKPRDYRMSIPKSMRKVAMTSALTSKVADMVVLEDLTFEAPKTKEAVKMLNAFEAKKTLIITAEVNENVYKSARNIEGVTVMPVNNINVYDLLNCKTLMITKEAVNKIEEVYA</sequence>
<comment type="function">
    <text evidence="1">One of the primary rRNA binding proteins, this protein initially binds near the 5'-end of the 23S rRNA. It is important during the early stages of 50S assembly. It makes multiple contacts with different domains of the 23S rRNA in the assembled 50S subunit and ribosome.</text>
</comment>
<comment type="function">
    <text evidence="1">Forms part of the polypeptide exit tunnel.</text>
</comment>
<comment type="subunit">
    <text evidence="1">Part of the 50S ribosomal subunit.</text>
</comment>
<comment type="similarity">
    <text evidence="1">Belongs to the universal ribosomal protein uL4 family.</text>
</comment>